<protein>
    <recommendedName>
        <fullName evidence="1">Flagellar hook-basal body complex protein FliE</fullName>
    </recommendedName>
</protein>
<comment type="subcellular location">
    <subcellularLocation>
        <location evidence="1">Bacterial flagellum basal body</location>
    </subcellularLocation>
</comment>
<comment type="similarity">
    <text evidence="1">Belongs to the FliE family.</text>
</comment>
<organism>
    <name type="scientific">Mesorhizobium japonicum (strain LMG 29417 / CECT 9101 / MAFF 303099)</name>
    <name type="common">Mesorhizobium loti (strain MAFF 303099)</name>
    <dbReference type="NCBI Taxonomy" id="266835"/>
    <lineage>
        <taxon>Bacteria</taxon>
        <taxon>Pseudomonadati</taxon>
        <taxon>Pseudomonadota</taxon>
        <taxon>Alphaproteobacteria</taxon>
        <taxon>Hyphomicrobiales</taxon>
        <taxon>Phyllobacteriaceae</taxon>
        <taxon>Mesorhizobium</taxon>
    </lineage>
</organism>
<reference key="1">
    <citation type="journal article" date="2000" name="DNA Res.">
        <title>Complete genome structure of the nitrogen-fixing symbiotic bacterium Mesorhizobium loti.</title>
        <authorList>
            <person name="Kaneko T."/>
            <person name="Nakamura Y."/>
            <person name="Sato S."/>
            <person name="Asamizu E."/>
            <person name="Kato T."/>
            <person name="Sasamoto S."/>
            <person name="Watanabe A."/>
            <person name="Idesawa K."/>
            <person name="Ishikawa A."/>
            <person name="Kawashima K."/>
            <person name="Kimura T."/>
            <person name="Kishida Y."/>
            <person name="Kiyokawa C."/>
            <person name="Kohara M."/>
            <person name="Matsumoto M."/>
            <person name="Matsuno A."/>
            <person name="Mochizuki Y."/>
            <person name="Nakayama S."/>
            <person name="Nakazaki N."/>
            <person name="Shimpo S."/>
            <person name="Sugimoto M."/>
            <person name="Takeuchi C."/>
            <person name="Yamada M."/>
            <person name="Tabata S."/>
        </authorList>
    </citation>
    <scope>NUCLEOTIDE SEQUENCE [LARGE SCALE GENOMIC DNA]</scope>
    <source>
        <strain>LMG 29417 / CECT 9101 / MAFF 303099</strain>
    </source>
</reference>
<feature type="chain" id="PRO_0000105560" description="Flagellar hook-basal body complex protein FliE">
    <location>
        <begin position="1"/>
        <end position="107"/>
    </location>
</feature>
<gene>
    <name evidence="1" type="primary">fliE</name>
    <name type="ordered locus">mlr2913</name>
</gene>
<name>FLIE_RHILO</name>
<keyword id="KW-0975">Bacterial flagellum</keyword>
<accession>Q98HD8</accession>
<sequence>MIVNGIGALNLKPGLGDTATDLIQGGVAPATSGNLGTSFAEAVSQAASKTVNTLQNAEQVSLQALKGDADTRQVVDAVMSAQQALQTAVAIRDKVVSAYLEVSRMGI</sequence>
<proteinExistence type="inferred from homology"/>
<dbReference type="EMBL" id="BA000012">
    <property type="protein sequence ID" value="BAB49928.1"/>
    <property type="molecule type" value="Genomic_DNA"/>
</dbReference>
<dbReference type="RefSeq" id="WP_010911275.1">
    <property type="nucleotide sequence ID" value="NC_002678.2"/>
</dbReference>
<dbReference type="SMR" id="Q98HD8"/>
<dbReference type="KEGG" id="mlo:mlr2913"/>
<dbReference type="PATRIC" id="fig|266835.9.peg.2332"/>
<dbReference type="eggNOG" id="COG1677">
    <property type="taxonomic scope" value="Bacteria"/>
</dbReference>
<dbReference type="HOGENOM" id="CLU_147249_2_0_5"/>
<dbReference type="Proteomes" id="UP000000552">
    <property type="component" value="Chromosome"/>
</dbReference>
<dbReference type="GO" id="GO:0009425">
    <property type="term" value="C:bacterial-type flagellum basal body"/>
    <property type="evidence" value="ECO:0007669"/>
    <property type="project" value="UniProtKB-SubCell"/>
</dbReference>
<dbReference type="GO" id="GO:0003774">
    <property type="term" value="F:cytoskeletal motor activity"/>
    <property type="evidence" value="ECO:0007669"/>
    <property type="project" value="InterPro"/>
</dbReference>
<dbReference type="GO" id="GO:0005198">
    <property type="term" value="F:structural molecule activity"/>
    <property type="evidence" value="ECO:0007669"/>
    <property type="project" value="InterPro"/>
</dbReference>
<dbReference type="GO" id="GO:0071973">
    <property type="term" value="P:bacterial-type flagellum-dependent cell motility"/>
    <property type="evidence" value="ECO:0007669"/>
    <property type="project" value="InterPro"/>
</dbReference>
<dbReference type="HAMAP" id="MF_00724">
    <property type="entry name" value="FliE"/>
    <property type="match status" value="1"/>
</dbReference>
<dbReference type="InterPro" id="IPR001624">
    <property type="entry name" value="FliE"/>
</dbReference>
<dbReference type="PANTHER" id="PTHR34653">
    <property type="match status" value="1"/>
</dbReference>
<dbReference type="PANTHER" id="PTHR34653:SF1">
    <property type="entry name" value="FLAGELLAR HOOK-BASAL BODY COMPLEX PROTEIN FLIE"/>
    <property type="match status" value="1"/>
</dbReference>
<dbReference type="Pfam" id="PF02049">
    <property type="entry name" value="FliE"/>
    <property type="match status" value="1"/>
</dbReference>
<evidence type="ECO:0000255" key="1">
    <source>
        <dbReference type="HAMAP-Rule" id="MF_00724"/>
    </source>
</evidence>